<evidence type="ECO:0000255" key="1">
    <source>
        <dbReference type="HAMAP-Rule" id="MF_00446"/>
    </source>
</evidence>
<feature type="chain" id="PRO_0000306915" description="Aspartate 1-decarboxylase beta chain" evidence="1">
    <location>
        <begin position="1"/>
        <end position="24"/>
    </location>
</feature>
<feature type="chain" id="PRO_0000306916" description="Aspartate 1-decarboxylase alpha chain" evidence="1">
    <location>
        <begin position="25"/>
        <end position="136"/>
    </location>
</feature>
<feature type="active site" description="Schiff-base intermediate with substrate; via pyruvic acid" evidence="1">
    <location>
        <position position="25"/>
    </location>
</feature>
<feature type="active site" description="Proton donor" evidence="1">
    <location>
        <position position="58"/>
    </location>
</feature>
<feature type="binding site" evidence="1">
    <location>
        <position position="57"/>
    </location>
    <ligand>
        <name>substrate</name>
    </ligand>
</feature>
<feature type="binding site" evidence="1">
    <location>
        <begin position="73"/>
        <end position="75"/>
    </location>
    <ligand>
        <name>substrate</name>
    </ligand>
</feature>
<feature type="modified residue" description="Pyruvic acid (Ser)" evidence="1">
    <location>
        <position position="25"/>
    </location>
</feature>
<reference key="1">
    <citation type="journal article" date="2009" name="Genome Res.">
        <title>Complete genome of the cellulolytic thermophile Acidothermus cellulolyticus 11B provides insights into its ecophysiological and evolutionary adaptations.</title>
        <authorList>
            <person name="Barabote R.D."/>
            <person name="Xie G."/>
            <person name="Leu D.H."/>
            <person name="Normand P."/>
            <person name="Necsulea A."/>
            <person name="Daubin V."/>
            <person name="Medigue C."/>
            <person name="Adney W.S."/>
            <person name="Xu X.C."/>
            <person name="Lapidus A."/>
            <person name="Parales R.E."/>
            <person name="Detter C."/>
            <person name="Pujic P."/>
            <person name="Bruce D."/>
            <person name="Lavire C."/>
            <person name="Challacombe J.F."/>
            <person name="Brettin T.S."/>
            <person name="Berry A.M."/>
        </authorList>
    </citation>
    <scope>NUCLEOTIDE SEQUENCE [LARGE SCALE GENOMIC DNA]</scope>
    <source>
        <strain>ATCC 43068 / DSM 8971 / 11B</strain>
    </source>
</reference>
<gene>
    <name evidence="1" type="primary">panD</name>
    <name type="ordered locus">Acel_0212</name>
</gene>
<proteinExistence type="inferred from homology"/>
<keyword id="KW-0068">Autocatalytic cleavage</keyword>
<keyword id="KW-0963">Cytoplasm</keyword>
<keyword id="KW-0210">Decarboxylase</keyword>
<keyword id="KW-0456">Lyase</keyword>
<keyword id="KW-0566">Pantothenate biosynthesis</keyword>
<keyword id="KW-0670">Pyruvate</keyword>
<keyword id="KW-1185">Reference proteome</keyword>
<keyword id="KW-0704">Schiff base</keyword>
<keyword id="KW-0865">Zymogen</keyword>
<sequence length="136" mass="14512">MLRTMLHAKIHRATVTRADLHYVGSITLDLDLMEAADILPGELVAVADINNGNRLETYVIAGERGSGVVGINGAAARLVHPGDLVIIMSYVQLPDAEARRHHPRVVFVDAENRIIGTGTDPAEPLPGSGLLSGHHT</sequence>
<accession>A0LRC6</accession>
<dbReference type="EC" id="4.1.1.11" evidence="1"/>
<dbReference type="EMBL" id="CP000481">
    <property type="protein sequence ID" value="ABK51986.1"/>
    <property type="molecule type" value="Genomic_DNA"/>
</dbReference>
<dbReference type="RefSeq" id="WP_011719050.1">
    <property type="nucleotide sequence ID" value="NC_008578.1"/>
</dbReference>
<dbReference type="SMR" id="A0LRC6"/>
<dbReference type="FunCoup" id="A0LRC6">
    <property type="interactions" value="91"/>
</dbReference>
<dbReference type="STRING" id="351607.Acel_0212"/>
<dbReference type="KEGG" id="ace:Acel_0212"/>
<dbReference type="eggNOG" id="COG0853">
    <property type="taxonomic scope" value="Bacteria"/>
</dbReference>
<dbReference type="HOGENOM" id="CLU_115305_2_0_11"/>
<dbReference type="InParanoid" id="A0LRC6"/>
<dbReference type="OrthoDB" id="9803983at2"/>
<dbReference type="UniPathway" id="UPA00028">
    <property type="reaction ID" value="UER00002"/>
</dbReference>
<dbReference type="Proteomes" id="UP000008221">
    <property type="component" value="Chromosome"/>
</dbReference>
<dbReference type="GO" id="GO:0005829">
    <property type="term" value="C:cytosol"/>
    <property type="evidence" value="ECO:0007669"/>
    <property type="project" value="TreeGrafter"/>
</dbReference>
<dbReference type="GO" id="GO:0004068">
    <property type="term" value="F:aspartate 1-decarboxylase activity"/>
    <property type="evidence" value="ECO:0007669"/>
    <property type="project" value="UniProtKB-UniRule"/>
</dbReference>
<dbReference type="GO" id="GO:0006523">
    <property type="term" value="P:alanine biosynthetic process"/>
    <property type="evidence" value="ECO:0007669"/>
    <property type="project" value="InterPro"/>
</dbReference>
<dbReference type="GO" id="GO:0015940">
    <property type="term" value="P:pantothenate biosynthetic process"/>
    <property type="evidence" value="ECO:0007669"/>
    <property type="project" value="UniProtKB-UniRule"/>
</dbReference>
<dbReference type="CDD" id="cd06919">
    <property type="entry name" value="Asp_decarbox"/>
    <property type="match status" value="1"/>
</dbReference>
<dbReference type="Gene3D" id="2.40.40.20">
    <property type="match status" value="1"/>
</dbReference>
<dbReference type="HAMAP" id="MF_00446">
    <property type="entry name" value="PanD"/>
    <property type="match status" value="1"/>
</dbReference>
<dbReference type="InterPro" id="IPR009010">
    <property type="entry name" value="Asp_de-COase-like_dom_sf"/>
</dbReference>
<dbReference type="InterPro" id="IPR003190">
    <property type="entry name" value="Asp_decarbox"/>
</dbReference>
<dbReference type="NCBIfam" id="TIGR00223">
    <property type="entry name" value="panD"/>
    <property type="match status" value="1"/>
</dbReference>
<dbReference type="PANTHER" id="PTHR21012">
    <property type="entry name" value="ASPARTATE 1-DECARBOXYLASE"/>
    <property type="match status" value="1"/>
</dbReference>
<dbReference type="PANTHER" id="PTHR21012:SF0">
    <property type="entry name" value="ASPARTATE 1-DECARBOXYLASE"/>
    <property type="match status" value="1"/>
</dbReference>
<dbReference type="Pfam" id="PF02261">
    <property type="entry name" value="Asp_decarbox"/>
    <property type="match status" value="1"/>
</dbReference>
<dbReference type="PIRSF" id="PIRSF006246">
    <property type="entry name" value="Asp_decarbox"/>
    <property type="match status" value="1"/>
</dbReference>
<dbReference type="SUPFAM" id="SSF50692">
    <property type="entry name" value="ADC-like"/>
    <property type="match status" value="1"/>
</dbReference>
<protein>
    <recommendedName>
        <fullName evidence="1">Aspartate 1-decarboxylase</fullName>
        <ecNumber evidence="1">4.1.1.11</ecNumber>
    </recommendedName>
    <alternativeName>
        <fullName evidence="1">Aspartate alpha-decarboxylase</fullName>
    </alternativeName>
    <component>
        <recommendedName>
            <fullName evidence="1">Aspartate 1-decarboxylase beta chain</fullName>
        </recommendedName>
    </component>
    <component>
        <recommendedName>
            <fullName evidence="1">Aspartate 1-decarboxylase alpha chain</fullName>
        </recommendedName>
    </component>
</protein>
<name>PAND_ACIC1</name>
<organism>
    <name type="scientific">Acidothermus cellulolyticus (strain ATCC 43068 / DSM 8971 / 11B)</name>
    <dbReference type="NCBI Taxonomy" id="351607"/>
    <lineage>
        <taxon>Bacteria</taxon>
        <taxon>Bacillati</taxon>
        <taxon>Actinomycetota</taxon>
        <taxon>Actinomycetes</taxon>
        <taxon>Acidothermales</taxon>
        <taxon>Acidothermaceae</taxon>
        <taxon>Acidothermus</taxon>
    </lineage>
</organism>
<comment type="function">
    <text evidence="1">Catalyzes the pyruvoyl-dependent decarboxylation of aspartate to produce beta-alanine.</text>
</comment>
<comment type="catalytic activity">
    <reaction evidence="1">
        <text>L-aspartate + H(+) = beta-alanine + CO2</text>
        <dbReference type="Rhea" id="RHEA:19497"/>
        <dbReference type="ChEBI" id="CHEBI:15378"/>
        <dbReference type="ChEBI" id="CHEBI:16526"/>
        <dbReference type="ChEBI" id="CHEBI:29991"/>
        <dbReference type="ChEBI" id="CHEBI:57966"/>
        <dbReference type="EC" id="4.1.1.11"/>
    </reaction>
</comment>
<comment type="cofactor">
    <cofactor evidence="1">
        <name>pyruvate</name>
        <dbReference type="ChEBI" id="CHEBI:15361"/>
    </cofactor>
    <text evidence="1">Binds 1 pyruvoyl group covalently per subunit.</text>
</comment>
<comment type="pathway">
    <text evidence="1">Cofactor biosynthesis; (R)-pantothenate biosynthesis; beta-alanine from L-aspartate: step 1/1.</text>
</comment>
<comment type="subunit">
    <text evidence="1">Heterooctamer of four alpha and four beta subunits.</text>
</comment>
<comment type="subcellular location">
    <subcellularLocation>
        <location evidence="1">Cytoplasm</location>
    </subcellularLocation>
</comment>
<comment type="PTM">
    <text evidence="1">Is synthesized initially as an inactive proenzyme, which is activated by self-cleavage at a specific serine bond to produce a beta-subunit with a hydroxyl group at its C-terminus and an alpha-subunit with a pyruvoyl group at its N-terminus.</text>
</comment>
<comment type="similarity">
    <text evidence="1">Belongs to the PanD family.</text>
</comment>